<gene>
    <name evidence="1" type="primary">rps15</name>
    <name type="ordered locus">Mlab_0290</name>
</gene>
<reference key="1">
    <citation type="journal article" date="2009" name="Stand. Genomic Sci.">
        <title>Complete genome sequence of Methanocorpusculum labreanum type strain Z.</title>
        <authorList>
            <person name="Anderson I.J."/>
            <person name="Sieprawska-Lupa M."/>
            <person name="Goltsman E."/>
            <person name="Lapidus A."/>
            <person name="Copeland A."/>
            <person name="Glavina Del Rio T."/>
            <person name="Tice H."/>
            <person name="Dalin E."/>
            <person name="Barry K."/>
            <person name="Pitluck S."/>
            <person name="Hauser L."/>
            <person name="Land M."/>
            <person name="Lucas S."/>
            <person name="Richardson P."/>
            <person name="Whitman W.B."/>
            <person name="Kyrpides N.C."/>
        </authorList>
    </citation>
    <scope>NUCLEOTIDE SEQUENCE [LARGE SCALE GENOMIC DNA]</scope>
    <source>
        <strain>ATCC 43576 / DSM 4855 / Z</strain>
    </source>
</reference>
<dbReference type="EMBL" id="CP000559">
    <property type="protein sequence ID" value="ABN06466.1"/>
    <property type="molecule type" value="Genomic_DNA"/>
</dbReference>
<dbReference type="RefSeq" id="WP_011832667.1">
    <property type="nucleotide sequence ID" value="NC_008942.1"/>
</dbReference>
<dbReference type="SMR" id="A2SQ60"/>
<dbReference type="STRING" id="410358.Mlab_0290"/>
<dbReference type="GeneID" id="4795344"/>
<dbReference type="KEGG" id="mla:Mlab_0290"/>
<dbReference type="eggNOG" id="arCOG04185">
    <property type="taxonomic scope" value="Archaea"/>
</dbReference>
<dbReference type="HOGENOM" id="CLU_090139_2_0_2"/>
<dbReference type="OrthoDB" id="6533at2157"/>
<dbReference type="Proteomes" id="UP000000365">
    <property type="component" value="Chromosome"/>
</dbReference>
<dbReference type="GO" id="GO:0022627">
    <property type="term" value="C:cytosolic small ribosomal subunit"/>
    <property type="evidence" value="ECO:0007669"/>
    <property type="project" value="TreeGrafter"/>
</dbReference>
<dbReference type="GO" id="GO:0070181">
    <property type="term" value="F:small ribosomal subunit rRNA binding"/>
    <property type="evidence" value="ECO:0007669"/>
    <property type="project" value="TreeGrafter"/>
</dbReference>
<dbReference type="GO" id="GO:0003735">
    <property type="term" value="F:structural constituent of ribosome"/>
    <property type="evidence" value="ECO:0007669"/>
    <property type="project" value="InterPro"/>
</dbReference>
<dbReference type="GO" id="GO:0006412">
    <property type="term" value="P:translation"/>
    <property type="evidence" value="ECO:0007669"/>
    <property type="project" value="UniProtKB-UniRule"/>
</dbReference>
<dbReference type="CDD" id="cd00353">
    <property type="entry name" value="Ribosomal_S15p_S13e"/>
    <property type="match status" value="1"/>
</dbReference>
<dbReference type="FunFam" id="1.10.287.10:FF:000003">
    <property type="entry name" value="40S ribosomal protein S13"/>
    <property type="match status" value="1"/>
</dbReference>
<dbReference type="Gene3D" id="4.10.860.130">
    <property type="match status" value="1"/>
</dbReference>
<dbReference type="Gene3D" id="1.10.287.10">
    <property type="entry name" value="S15/NS1, RNA-binding"/>
    <property type="match status" value="1"/>
</dbReference>
<dbReference type="HAMAP" id="MF_01343_A">
    <property type="entry name" value="Ribosomal_uS15_A"/>
    <property type="match status" value="1"/>
</dbReference>
<dbReference type="InterPro" id="IPR000589">
    <property type="entry name" value="Ribosomal_uS15"/>
</dbReference>
<dbReference type="InterPro" id="IPR023029">
    <property type="entry name" value="Ribosomal_uS15_arc_euk"/>
</dbReference>
<dbReference type="InterPro" id="IPR012606">
    <property type="entry name" value="Ribosomal_uS15_N"/>
</dbReference>
<dbReference type="InterPro" id="IPR009068">
    <property type="entry name" value="uS15_NS1_RNA-bd_sf"/>
</dbReference>
<dbReference type="NCBIfam" id="NF006331">
    <property type="entry name" value="PRK08561.1"/>
    <property type="match status" value="1"/>
</dbReference>
<dbReference type="PANTHER" id="PTHR11885">
    <property type="entry name" value="RIBOSOMAL PROTEIN S15P/S13E"/>
    <property type="match status" value="1"/>
</dbReference>
<dbReference type="PANTHER" id="PTHR11885:SF6">
    <property type="entry name" value="SMALL RIBOSOMAL SUBUNIT PROTEIN US15"/>
    <property type="match status" value="1"/>
</dbReference>
<dbReference type="Pfam" id="PF08069">
    <property type="entry name" value="Ribosomal_S13_N"/>
    <property type="match status" value="1"/>
</dbReference>
<dbReference type="Pfam" id="PF00312">
    <property type="entry name" value="Ribosomal_S15"/>
    <property type="match status" value="1"/>
</dbReference>
<dbReference type="SMART" id="SM01386">
    <property type="entry name" value="Ribosomal_S13_N"/>
    <property type="match status" value="1"/>
</dbReference>
<dbReference type="SMART" id="SM01387">
    <property type="entry name" value="Ribosomal_S15"/>
    <property type="match status" value="1"/>
</dbReference>
<dbReference type="SUPFAM" id="SSF47060">
    <property type="entry name" value="S15/NS1 RNA-binding domain"/>
    <property type="match status" value="1"/>
</dbReference>
<dbReference type="PROSITE" id="PS00362">
    <property type="entry name" value="RIBOSOMAL_S15"/>
    <property type="match status" value="1"/>
</dbReference>
<evidence type="ECO:0000255" key="1">
    <source>
        <dbReference type="HAMAP-Rule" id="MF_01343"/>
    </source>
</evidence>
<evidence type="ECO:0000305" key="2"/>
<protein>
    <recommendedName>
        <fullName evidence="1">Small ribosomal subunit protein uS15</fullName>
    </recommendedName>
    <alternativeName>
        <fullName evidence="2">30S ribosomal protein S15</fullName>
    </alternativeName>
</protein>
<accession>A2SQ60</accession>
<sequence length="152" mass="17625">MARMHARRRGIASSVRPYRKEVPAWSNSDVKEIEGKIVELRKAGLTCAQIGLVLRDKHGVPNVKLATGKRINAIVRENDLDTDIPEDLRNLMHKALMMRKHLEQNRKDLHNKRQLQLTEAKVRRLVKYYVGTKRLPLGWVYKPETAEILLSR</sequence>
<proteinExistence type="inferred from homology"/>
<comment type="subunit">
    <text evidence="1">Part of the 30S ribosomal subunit.</text>
</comment>
<comment type="similarity">
    <text evidence="1">Belongs to the universal ribosomal protein uS15 family.</text>
</comment>
<keyword id="KW-1185">Reference proteome</keyword>
<keyword id="KW-0687">Ribonucleoprotein</keyword>
<keyword id="KW-0689">Ribosomal protein</keyword>
<feature type="chain" id="PRO_1000054812" description="Small ribosomal subunit protein uS15">
    <location>
        <begin position="1"/>
        <end position="152"/>
    </location>
</feature>
<organism>
    <name type="scientific">Methanocorpusculum labreanum (strain ATCC 43576 / DSM 4855 / Z)</name>
    <dbReference type="NCBI Taxonomy" id="410358"/>
    <lineage>
        <taxon>Archaea</taxon>
        <taxon>Methanobacteriati</taxon>
        <taxon>Methanobacteriota</taxon>
        <taxon>Stenosarchaea group</taxon>
        <taxon>Methanomicrobia</taxon>
        <taxon>Methanomicrobiales</taxon>
        <taxon>Methanocorpusculaceae</taxon>
        <taxon>Methanocorpusculum</taxon>
    </lineage>
</organism>
<name>RS15_METLZ</name>